<evidence type="ECO:0000255" key="1">
    <source>
        <dbReference type="HAMAP-Rule" id="MF_00014"/>
    </source>
</evidence>
<protein>
    <recommendedName>
        <fullName evidence="1">Ribosome maturation factor RimM</fullName>
    </recommendedName>
</protein>
<gene>
    <name evidence="1" type="primary">rimM</name>
    <name type="ordered locus">TT_C0671</name>
</gene>
<proteinExistence type="inferred from homology"/>
<dbReference type="EMBL" id="AE017221">
    <property type="protein sequence ID" value="AAS81019.1"/>
    <property type="molecule type" value="Genomic_DNA"/>
</dbReference>
<dbReference type="RefSeq" id="WP_008632437.1">
    <property type="nucleotide sequence ID" value="NC_005835.1"/>
</dbReference>
<dbReference type="BMRB" id="Q72JU7"/>
<dbReference type="SMR" id="Q72JU7"/>
<dbReference type="KEGG" id="tth:TT_C0671"/>
<dbReference type="eggNOG" id="COG0806">
    <property type="taxonomic scope" value="Bacteria"/>
</dbReference>
<dbReference type="HOGENOM" id="CLU_077636_0_1_0"/>
<dbReference type="OrthoDB" id="9810331at2"/>
<dbReference type="Proteomes" id="UP000000592">
    <property type="component" value="Chromosome"/>
</dbReference>
<dbReference type="GO" id="GO:0005737">
    <property type="term" value="C:cytoplasm"/>
    <property type="evidence" value="ECO:0007669"/>
    <property type="project" value="UniProtKB-SubCell"/>
</dbReference>
<dbReference type="GO" id="GO:0005840">
    <property type="term" value="C:ribosome"/>
    <property type="evidence" value="ECO:0007669"/>
    <property type="project" value="InterPro"/>
</dbReference>
<dbReference type="GO" id="GO:0043022">
    <property type="term" value="F:ribosome binding"/>
    <property type="evidence" value="ECO:0007669"/>
    <property type="project" value="InterPro"/>
</dbReference>
<dbReference type="GO" id="GO:0042274">
    <property type="term" value="P:ribosomal small subunit biogenesis"/>
    <property type="evidence" value="ECO:0007669"/>
    <property type="project" value="UniProtKB-UniRule"/>
</dbReference>
<dbReference type="GO" id="GO:0006364">
    <property type="term" value="P:rRNA processing"/>
    <property type="evidence" value="ECO:0007669"/>
    <property type="project" value="UniProtKB-UniRule"/>
</dbReference>
<dbReference type="Gene3D" id="2.30.30.240">
    <property type="entry name" value="PRC-barrel domain"/>
    <property type="match status" value="1"/>
</dbReference>
<dbReference type="Gene3D" id="2.40.30.60">
    <property type="entry name" value="RimM"/>
    <property type="match status" value="1"/>
</dbReference>
<dbReference type="HAMAP" id="MF_00014">
    <property type="entry name" value="Ribosome_mat_RimM"/>
    <property type="match status" value="1"/>
</dbReference>
<dbReference type="InterPro" id="IPR027275">
    <property type="entry name" value="PRC-brl_dom"/>
</dbReference>
<dbReference type="InterPro" id="IPR011033">
    <property type="entry name" value="PRC_barrel-like_sf"/>
</dbReference>
<dbReference type="InterPro" id="IPR011961">
    <property type="entry name" value="RimM"/>
</dbReference>
<dbReference type="InterPro" id="IPR002676">
    <property type="entry name" value="RimM_N"/>
</dbReference>
<dbReference type="InterPro" id="IPR036976">
    <property type="entry name" value="RimM_N_sf"/>
</dbReference>
<dbReference type="InterPro" id="IPR009000">
    <property type="entry name" value="Transl_B-barrel_sf"/>
</dbReference>
<dbReference type="NCBIfam" id="TIGR02273">
    <property type="entry name" value="16S_RimM"/>
    <property type="match status" value="1"/>
</dbReference>
<dbReference type="NCBIfam" id="NF010403">
    <property type="entry name" value="PRK13829.1"/>
    <property type="match status" value="1"/>
</dbReference>
<dbReference type="PANTHER" id="PTHR33692">
    <property type="entry name" value="RIBOSOME MATURATION FACTOR RIMM"/>
    <property type="match status" value="1"/>
</dbReference>
<dbReference type="PANTHER" id="PTHR33692:SF1">
    <property type="entry name" value="RIBOSOME MATURATION FACTOR RIMM"/>
    <property type="match status" value="1"/>
</dbReference>
<dbReference type="Pfam" id="PF05239">
    <property type="entry name" value="PRC"/>
    <property type="match status" value="1"/>
</dbReference>
<dbReference type="Pfam" id="PF01782">
    <property type="entry name" value="RimM"/>
    <property type="match status" value="1"/>
</dbReference>
<dbReference type="SUPFAM" id="SSF50346">
    <property type="entry name" value="PRC-barrel domain"/>
    <property type="match status" value="1"/>
</dbReference>
<dbReference type="SUPFAM" id="SSF50447">
    <property type="entry name" value="Translation proteins"/>
    <property type="match status" value="1"/>
</dbReference>
<sequence>MRLVEIGRFGAPYALKGGLRFRGEPVVLHLERVYVEGHGWRAIEDLYRVGEELVVHLAGVTDRTLAEALVGLRVYAEVADLPPLEEGRYYYFALIGLPVYVEGRQVGEVVDILDAGAQDVLIIRGVGERLRDRAERLVPLQAPYVRVEEGGIHVDPIPGLFD</sequence>
<accession>Q72JU7</accession>
<keyword id="KW-0143">Chaperone</keyword>
<keyword id="KW-0963">Cytoplasm</keyword>
<keyword id="KW-0690">Ribosome biogenesis</keyword>
<keyword id="KW-0698">rRNA processing</keyword>
<feature type="chain" id="PRO_0000163379" description="Ribosome maturation factor RimM">
    <location>
        <begin position="1"/>
        <end position="162"/>
    </location>
</feature>
<feature type="domain" description="PRC barrel" evidence="1">
    <location>
        <begin position="86"/>
        <end position="160"/>
    </location>
</feature>
<organism>
    <name type="scientific">Thermus thermophilus (strain ATCC BAA-163 / DSM 7039 / HB27)</name>
    <dbReference type="NCBI Taxonomy" id="262724"/>
    <lineage>
        <taxon>Bacteria</taxon>
        <taxon>Thermotogati</taxon>
        <taxon>Deinococcota</taxon>
        <taxon>Deinococci</taxon>
        <taxon>Thermales</taxon>
        <taxon>Thermaceae</taxon>
        <taxon>Thermus</taxon>
    </lineage>
</organism>
<comment type="function">
    <text evidence="1">An accessory protein needed during the final step in the assembly of 30S ribosomal subunit, possibly for assembly of the head region. Essential for efficient processing of 16S rRNA. May be needed both before and after RbfA during the maturation of 16S rRNA. It has affinity for free ribosomal 30S subunits but not for 70S ribosomes.</text>
</comment>
<comment type="subunit">
    <text evidence="1">Binds ribosomal protein uS19.</text>
</comment>
<comment type="subcellular location">
    <subcellularLocation>
        <location evidence="1">Cytoplasm</location>
    </subcellularLocation>
</comment>
<comment type="domain">
    <text evidence="1">The PRC barrel domain binds ribosomal protein uS19.</text>
</comment>
<comment type="similarity">
    <text evidence="1">Belongs to the RimM family.</text>
</comment>
<reference key="1">
    <citation type="journal article" date="2004" name="Nat. Biotechnol.">
        <title>The genome sequence of the extreme thermophile Thermus thermophilus.</title>
        <authorList>
            <person name="Henne A."/>
            <person name="Brueggemann H."/>
            <person name="Raasch C."/>
            <person name="Wiezer A."/>
            <person name="Hartsch T."/>
            <person name="Liesegang H."/>
            <person name="Johann A."/>
            <person name="Lienard T."/>
            <person name="Gohl O."/>
            <person name="Martinez-Arias R."/>
            <person name="Jacobi C."/>
            <person name="Starkuviene V."/>
            <person name="Schlenczeck S."/>
            <person name="Dencker S."/>
            <person name="Huber R."/>
            <person name="Klenk H.-P."/>
            <person name="Kramer W."/>
            <person name="Merkl R."/>
            <person name="Gottschalk G."/>
            <person name="Fritz H.-J."/>
        </authorList>
    </citation>
    <scope>NUCLEOTIDE SEQUENCE [LARGE SCALE GENOMIC DNA]</scope>
    <source>
        <strain>ATCC BAA-163 / DSM 7039 / HB27</strain>
    </source>
</reference>
<name>RIMM_THET2</name>